<gene>
    <name evidence="1" type="primary">fdhD</name>
    <name type="ordered locus">SPA3880</name>
</gene>
<sequence length="278" mass="30320">MNNILSEEVLNVTDFTTSRQLTLWKREDLQSSQLDDVAEEVPVALVYNGISHVVMMASPKDLTHFAMGFSLSEGIIDSPREIYGMDVVPSCNGLEVQIDLSSRRFMGLKARRRALAGRTGCGVCGVEQLNDIGKPVQPLPFSQTFNLGNLDRALKHLNDFQPTSKLTGCTHAAAWVMPSGELAGGHEDVGRHVALDKLLGRRAMEGEEWRQGAALVSSRASYEMVQKSAMCGVEILFAVSAATTLAVEVAERCNLTLVGFCKPGRATIYTHPQRLIAD</sequence>
<accession>Q5PKG0</accession>
<feature type="chain" id="PRO_0000152917" description="Sulfur carrier protein FdhD">
    <location>
        <begin position="1"/>
        <end position="278"/>
    </location>
</feature>
<feature type="active site" description="Cysteine persulfide intermediate" evidence="1">
    <location>
        <position position="121"/>
    </location>
</feature>
<feature type="binding site" evidence="1">
    <location>
        <begin position="260"/>
        <end position="265"/>
    </location>
    <ligand>
        <name>Mo-bis(molybdopterin guanine dinucleotide)</name>
        <dbReference type="ChEBI" id="CHEBI:60539"/>
    </ligand>
</feature>
<organism>
    <name type="scientific">Salmonella paratyphi A (strain ATCC 9150 / SARB42)</name>
    <dbReference type="NCBI Taxonomy" id="295319"/>
    <lineage>
        <taxon>Bacteria</taxon>
        <taxon>Pseudomonadati</taxon>
        <taxon>Pseudomonadota</taxon>
        <taxon>Gammaproteobacteria</taxon>
        <taxon>Enterobacterales</taxon>
        <taxon>Enterobacteriaceae</taxon>
        <taxon>Salmonella</taxon>
    </lineage>
</organism>
<comment type="function">
    <text evidence="1">Required for formate dehydrogenase (FDH) activity. Acts as a sulfur carrier protein that transfers sulfur from IscS to the molybdenum cofactor prior to its insertion into FDH.</text>
</comment>
<comment type="subcellular location">
    <subcellularLocation>
        <location evidence="1">Cytoplasm</location>
    </subcellularLocation>
</comment>
<comment type="similarity">
    <text evidence="1">Belongs to the FdhD family.</text>
</comment>
<keyword id="KW-0963">Cytoplasm</keyword>
<keyword id="KW-0501">Molybdenum cofactor biosynthesis</keyword>
<evidence type="ECO:0000255" key="1">
    <source>
        <dbReference type="HAMAP-Rule" id="MF_00187"/>
    </source>
</evidence>
<name>FDHD_SALPA</name>
<proteinExistence type="inferred from homology"/>
<protein>
    <recommendedName>
        <fullName evidence="1">Sulfur carrier protein FdhD</fullName>
    </recommendedName>
</protein>
<reference key="1">
    <citation type="journal article" date="2004" name="Nat. Genet.">
        <title>Comparison of genome degradation in Paratyphi A and Typhi, human-restricted serovars of Salmonella enterica that cause typhoid.</title>
        <authorList>
            <person name="McClelland M."/>
            <person name="Sanderson K.E."/>
            <person name="Clifton S.W."/>
            <person name="Latreille P."/>
            <person name="Porwollik S."/>
            <person name="Sabo A."/>
            <person name="Meyer R."/>
            <person name="Bieri T."/>
            <person name="Ozersky P."/>
            <person name="McLellan M."/>
            <person name="Harkins C.R."/>
            <person name="Wang C."/>
            <person name="Nguyen C."/>
            <person name="Berghoff A."/>
            <person name="Elliott G."/>
            <person name="Kohlberg S."/>
            <person name="Strong C."/>
            <person name="Du F."/>
            <person name="Carter J."/>
            <person name="Kremizki C."/>
            <person name="Layman D."/>
            <person name="Leonard S."/>
            <person name="Sun H."/>
            <person name="Fulton L."/>
            <person name="Nash W."/>
            <person name="Miner T."/>
            <person name="Minx P."/>
            <person name="Delehaunty K."/>
            <person name="Fronick C."/>
            <person name="Magrini V."/>
            <person name="Nhan M."/>
            <person name="Warren W."/>
            <person name="Florea L."/>
            <person name="Spieth J."/>
            <person name="Wilson R.K."/>
        </authorList>
    </citation>
    <scope>NUCLEOTIDE SEQUENCE [LARGE SCALE GENOMIC DNA]</scope>
    <source>
        <strain>ATCC 9150 / SARB42</strain>
    </source>
</reference>
<dbReference type="EMBL" id="CP000026">
    <property type="protein sequence ID" value="AAV79646.1"/>
    <property type="molecule type" value="Genomic_DNA"/>
</dbReference>
<dbReference type="RefSeq" id="WP_001059748.1">
    <property type="nucleotide sequence ID" value="NC_006511.1"/>
</dbReference>
<dbReference type="SMR" id="Q5PKG0"/>
<dbReference type="KEGG" id="spt:SPA3880"/>
<dbReference type="HOGENOM" id="CLU_056887_2_0_6"/>
<dbReference type="Proteomes" id="UP000008185">
    <property type="component" value="Chromosome"/>
</dbReference>
<dbReference type="GO" id="GO:0005737">
    <property type="term" value="C:cytoplasm"/>
    <property type="evidence" value="ECO:0007669"/>
    <property type="project" value="UniProtKB-SubCell"/>
</dbReference>
<dbReference type="GO" id="GO:0097163">
    <property type="term" value="F:sulfur carrier activity"/>
    <property type="evidence" value="ECO:0007669"/>
    <property type="project" value="UniProtKB-UniRule"/>
</dbReference>
<dbReference type="GO" id="GO:0016783">
    <property type="term" value="F:sulfurtransferase activity"/>
    <property type="evidence" value="ECO:0007669"/>
    <property type="project" value="InterPro"/>
</dbReference>
<dbReference type="GO" id="GO:0006777">
    <property type="term" value="P:Mo-molybdopterin cofactor biosynthetic process"/>
    <property type="evidence" value="ECO:0007669"/>
    <property type="project" value="UniProtKB-UniRule"/>
</dbReference>
<dbReference type="Gene3D" id="3.10.20.10">
    <property type="match status" value="1"/>
</dbReference>
<dbReference type="Gene3D" id="3.40.140.10">
    <property type="entry name" value="Cytidine Deaminase, domain 2"/>
    <property type="match status" value="1"/>
</dbReference>
<dbReference type="HAMAP" id="MF_00187">
    <property type="entry name" value="FdhD"/>
    <property type="match status" value="1"/>
</dbReference>
<dbReference type="InterPro" id="IPR016193">
    <property type="entry name" value="Cytidine_deaminase-like"/>
</dbReference>
<dbReference type="InterPro" id="IPR003786">
    <property type="entry name" value="FdhD"/>
</dbReference>
<dbReference type="NCBIfam" id="TIGR00129">
    <property type="entry name" value="fdhD_narQ"/>
    <property type="match status" value="1"/>
</dbReference>
<dbReference type="PANTHER" id="PTHR30592">
    <property type="entry name" value="FORMATE DEHYDROGENASE"/>
    <property type="match status" value="1"/>
</dbReference>
<dbReference type="PANTHER" id="PTHR30592:SF1">
    <property type="entry name" value="SULFUR CARRIER PROTEIN FDHD"/>
    <property type="match status" value="1"/>
</dbReference>
<dbReference type="Pfam" id="PF02634">
    <property type="entry name" value="FdhD-NarQ"/>
    <property type="match status" value="1"/>
</dbReference>
<dbReference type="PIRSF" id="PIRSF015626">
    <property type="entry name" value="FdhD"/>
    <property type="match status" value="1"/>
</dbReference>
<dbReference type="SUPFAM" id="SSF53927">
    <property type="entry name" value="Cytidine deaminase-like"/>
    <property type="match status" value="1"/>
</dbReference>